<dbReference type="EC" id="2.4.2.29" evidence="1"/>
<dbReference type="EMBL" id="CP000789">
    <property type="protein sequence ID" value="ABU70039.1"/>
    <property type="molecule type" value="Genomic_DNA"/>
</dbReference>
<dbReference type="RefSeq" id="WP_005424899.1">
    <property type="nucleotide sequence ID" value="NC_022269.1"/>
</dbReference>
<dbReference type="SMR" id="A7MT83"/>
<dbReference type="GeneID" id="67378328"/>
<dbReference type="KEGG" id="vha:VIBHAR_01046"/>
<dbReference type="PATRIC" id="fig|338187.25.peg.1582"/>
<dbReference type="UniPathway" id="UPA00392"/>
<dbReference type="Proteomes" id="UP000008152">
    <property type="component" value="Chromosome I"/>
</dbReference>
<dbReference type="GO" id="GO:0005829">
    <property type="term" value="C:cytosol"/>
    <property type="evidence" value="ECO:0007669"/>
    <property type="project" value="TreeGrafter"/>
</dbReference>
<dbReference type="GO" id="GO:0046872">
    <property type="term" value="F:metal ion binding"/>
    <property type="evidence" value="ECO:0007669"/>
    <property type="project" value="UniProtKB-KW"/>
</dbReference>
<dbReference type="GO" id="GO:0008479">
    <property type="term" value="F:tRNA-guanosine(34) queuine transglycosylase activity"/>
    <property type="evidence" value="ECO:0007669"/>
    <property type="project" value="UniProtKB-UniRule"/>
</dbReference>
<dbReference type="GO" id="GO:0008616">
    <property type="term" value="P:queuosine biosynthetic process"/>
    <property type="evidence" value="ECO:0007669"/>
    <property type="project" value="UniProtKB-UniRule"/>
</dbReference>
<dbReference type="GO" id="GO:0002099">
    <property type="term" value="P:tRNA wobble guanine modification"/>
    <property type="evidence" value="ECO:0007669"/>
    <property type="project" value="TreeGrafter"/>
</dbReference>
<dbReference type="GO" id="GO:0101030">
    <property type="term" value="P:tRNA-guanine transglycosylation"/>
    <property type="evidence" value="ECO:0007669"/>
    <property type="project" value="InterPro"/>
</dbReference>
<dbReference type="FunFam" id="3.20.20.105:FF:000001">
    <property type="entry name" value="Queuine tRNA-ribosyltransferase"/>
    <property type="match status" value="1"/>
</dbReference>
<dbReference type="Gene3D" id="3.20.20.105">
    <property type="entry name" value="Queuine tRNA-ribosyltransferase-like"/>
    <property type="match status" value="1"/>
</dbReference>
<dbReference type="HAMAP" id="MF_00168">
    <property type="entry name" value="Q_tRNA_Tgt"/>
    <property type="match status" value="1"/>
</dbReference>
<dbReference type="InterPro" id="IPR050076">
    <property type="entry name" value="ArchSynthase1/Queuine_TRR"/>
</dbReference>
<dbReference type="InterPro" id="IPR004803">
    <property type="entry name" value="TGT"/>
</dbReference>
<dbReference type="InterPro" id="IPR036511">
    <property type="entry name" value="TGT-like_sf"/>
</dbReference>
<dbReference type="InterPro" id="IPR002616">
    <property type="entry name" value="tRNA_ribo_trans-like"/>
</dbReference>
<dbReference type="NCBIfam" id="TIGR00430">
    <property type="entry name" value="Q_tRNA_tgt"/>
    <property type="match status" value="1"/>
</dbReference>
<dbReference type="NCBIfam" id="TIGR00449">
    <property type="entry name" value="tgt_general"/>
    <property type="match status" value="1"/>
</dbReference>
<dbReference type="PANTHER" id="PTHR46499">
    <property type="entry name" value="QUEUINE TRNA-RIBOSYLTRANSFERASE"/>
    <property type="match status" value="1"/>
</dbReference>
<dbReference type="PANTHER" id="PTHR46499:SF1">
    <property type="entry name" value="QUEUINE TRNA-RIBOSYLTRANSFERASE"/>
    <property type="match status" value="1"/>
</dbReference>
<dbReference type="Pfam" id="PF01702">
    <property type="entry name" value="TGT"/>
    <property type="match status" value="1"/>
</dbReference>
<dbReference type="SUPFAM" id="SSF51713">
    <property type="entry name" value="tRNA-guanine transglycosylase"/>
    <property type="match status" value="1"/>
</dbReference>
<sequence length="378" mass="43166">MKLSFDLKKKNGNARRGQLTFERGTVQTPAFMPVGTYGTVKGMTPEEVKGTGAEILLGNTFHLWLRPGQEVMKMHGDLHDFMNWHGPILTDSGGFQVFSLGKMRKITEKGVHFRSPVNGDKIFMDAEKSMEIQKDLGSDIVMIFDECTPYPATHNEAKKSMEMSLRWAQRSRDHFDKLENPNNLFGIVQGGVYEDLRDVSIKGLTEIGFDGYAVGGLAVGEPKEDMHRILEHTCPQLPEDKPRYLMGVGKPEDLVEGVRRGIDMFDCVMPTRNARNGHLFVTGGVIKIRNAKHKTDTTPLDPHCDCYTCQHYSKSYLHHLERCNEILGARLNTIHNLRYYQRLMESIRKAIDEDRFDEFVTEFYERRGREVPPLAKEQ</sequence>
<evidence type="ECO:0000255" key="1">
    <source>
        <dbReference type="HAMAP-Rule" id="MF_00168"/>
    </source>
</evidence>
<comment type="function">
    <text evidence="1">Catalyzes the base-exchange of a guanine (G) residue with the queuine precursor 7-aminomethyl-7-deazaguanine (PreQ1) at position 34 (anticodon wobble position) in tRNAs with GU(N) anticodons (tRNA-Asp, -Asn, -His and -Tyr). Catalysis occurs through a double-displacement mechanism. The nucleophile active site attacks the C1' of nucleotide 34 to detach the guanine base from the RNA, forming a covalent enzyme-RNA intermediate. The proton acceptor active site deprotonates the incoming PreQ1, allowing a nucleophilic attack on the C1' of the ribose to form the product. After dissociation, two additional enzymatic reactions on the tRNA convert PreQ1 to queuine (Q), resulting in the hypermodified nucleoside queuosine (7-(((4,5-cis-dihydroxy-2-cyclopenten-1-yl)amino)methyl)-7-deazaguanosine).</text>
</comment>
<comment type="catalytic activity">
    <reaction evidence="1">
        <text>7-aminomethyl-7-carbaguanine + guanosine(34) in tRNA = 7-aminomethyl-7-carbaguanosine(34) in tRNA + guanine</text>
        <dbReference type="Rhea" id="RHEA:24104"/>
        <dbReference type="Rhea" id="RHEA-COMP:10341"/>
        <dbReference type="Rhea" id="RHEA-COMP:10342"/>
        <dbReference type="ChEBI" id="CHEBI:16235"/>
        <dbReference type="ChEBI" id="CHEBI:58703"/>
        <dbReference type="ChEBI" id="CHEBI:74269"/>
        <dbReference type="ChEBI" id="CHEBI:82833"/>
        <dbReference type="EC" id="2.4.2.29"/>
    </reaction>
</comment>
<comment type="cofactor">
    <cofactor evidence="1">
        <name>Zn(2+)</name>
        <dbReference type="ChEBI" id="CHEBI:29105"/>
    </cofactor>
    <text evidence="1">Binds 1 zinc ion per subunit.</text>
</comment>
<comment type="pathway">
    <text evidence="1">tRNA modification; tRNA-queuosine biosynthesis.</text>
</comment>
<comment type="subunit">
    <text evidence="1">Homodimer. Within each dimer, one monomer is responsible for RNA recognition and catalysis, while the other monomer binds to the replacement base PreQ1.</text>
</comment>
<comment type="similarity">
    <text evidence="1">Belongs to the queuine tRNA-ribosyltransferase family.</text>
</comment>
<feature type="chain" id="PRO_1000016887" description="Queuine tRNA-ribosyltransferase">
    <location>
        <begin position="1"/>
        <end position="378"/>
    </location>
</feature>
<feature type="region of interest" description="RNA binding" evidence="1">
    <location>
        <begin position="247"/>
        <end position="253"/>
    </location>
</feature>
<feature type="region of interest" description="RNA binding; important for wobble base 34 recognition" evidence="1">
    <location>
        <begin position="271"/>
        <end position="275"/>
    </location>
</feature>
<feature type="active site" description="Proton acceptor" evidence="1">
    <location>
        <position position="91"/>
    </location>
</feature>
<feature type="active site" description="Nucleophile" evidence="1">
    <location>
        <position position="266"/>
    </location>
</feature>
<feature type="binding site" evidence="1">
    <location>
        <begin position="91"/>
        <end position="95"/>
    </location>
    <ligand>
        <name>substrate</name>
    </ligand>
</feature>
<feature type="binding site" evidence="1">
    <location>
        <position position="145"/>
    </location>
    <ligand>
        <name>substrate</name>
    </ligand>
</feature>
<feature type="binding site" evidence="1">
    <location>
        <position position="189"/>
    </location>
    <ligand>
        <name>substrate</name>
    </ligand>
</feature>
<feature type="binding site" evidence="1">
    <location>
        <position position="216"/>
    </location>
    <ligand>
        <name>substrate</name>
    </ligand>
</feature>
<feature type="binding site" evidence="1">
    <location>
        <position position="304"/>
    </location>
    <ligand>
        <name>Zn(2+)</name>
        <dbReference type="ChEBI" id="CHEBI:29105"/>
    </ligand>
</feature>
<feature type="binding site" evidence="1">
    <location>
        <position position="306"/>
    </location>
    <ligand>
        <name>Zn(2+)</name>
        <dbReference type="ChEBI" id="CHEBI:29105"/>
    </ligand>
</feature>
<feature type="binding site" evidence="1">
    <location>
        <position position="309"/>
    </location>
    <ligand>
        <name>Zn(2+)</name>
        <dbReference type="ChEBI" id="CHEBI:29105"/>
    </ligand>
</feature>
<feature type="binding site" evidence="1">
    <location>
        <position position="335"/>
    </location>
    <ligand>
        <name>Zn(2+)</name>
        <dbReference type="ChEBI" id="CHEBI:29105"/>
    </ligand>
</feature>
<protein>
    <recommendedName>
        <fullName evidence="1">Queuine tRNA-ribosyltransferase</fullName>
        <ecNumber evidence="1">2.4.2.29</ecNumber>
    </recommendedName>
    <alternativeName>
        <fullName evidence="1">Guanine insertion enzyme</fullName>
    </alternativeName>
    <alternativeName>
        <fullName evidence="1">tRNA-guanine transglycosylase</fullName>
    </alternativeName>
</protein>
<keyword id="KW-0328">Glycosyltransferase</keyword>
<keyword id="KW-0479">Metal-binding</keyword>
<keyword id="KW-0671">Queuosine biosynthesis</keyword>
<keyword id="KW-0808">Transferase</keyword>
<keyword id="KW-0819">tRNA processing</keyword>
<keyword id="KW-0862">Zinc</keyword>
<accession>A7MT83</accession>
<proteinExistence type="inferred from homology"/>
<reference key="1">
    <citation type="submission" date="2007-08" db="EMBL/GenBank/DDBJ databases">
        <authorList>
            <consortium name="The Vibrio harveyi Genome Sequencing Project"/>
            <person name="Bassler B."/>
            <person name="Clifton S.W."/>
            <person name="Fulton L."/>
            <person name="Delehaunty K."/>
            <person name="Fronick C."/>
            <person name="Harrison M."/>
            <person name="Markivic C."/>
            <person name="Fulton R."/>
            <person name="Tin-Wollam A.-M."/>
            <person name="Shah N."/>
            <person name="Pepin K."/>
            <person name="Nash W."/>
            <person name="Thiruvilangam P."/>
            <person name="Bhonagiri V."/>
            <person name="Waters C."/>
            <person name="Tu K.C."/>
            <person name="Irgon J."/>
            <person name="Wilson R.K."/>
        </authorList>
    </citation>
    <scope>NUCLEOTIDE SEQUENCE [LARGE SCALE GENOMIC DNA]</scope>
    <source>
        <strain>ATCC BAA-1116 / BB120</strain>
    </source>
</reference>
<organism>
    <name type="scientific">Vibrio campbellii (strain ATCC BAA-1116)</name>
    <dbReference type="NCBI Taxonomy" id="2902295"/>
    <lineage>
        <taxon>Bacteria</taxon>
        <taxon>Pseudomonadati</taxon>
        <taxon>Pseudomonadota</taxon>
        <taxon>Gammaproteobacteria</taxon>
        <taxon>Vibrionales</taxon>
        <taxon>Vibrionaceae</taxon>
        <taxon>Vibrio</taxon>
    </lineage>
</organism>
<name>TGT_VIBC1</name>
<gene>
    <name evidence="1" type="primary">tgt</name>
    <name type="ordered locus">VIBHAR_01046</name>
</gene>